<reference key="1">
    <citation type="submission" date="2009-01" db="EMBL/GenBank/DDBJ databases">
        <title>Complete sequence of chromosome of Caldicellulosiruptor becscii DSM 6725.</title>
        <authorList>
            <person name="Lucas S."/>
            <person name="Copeland A."/>
            <person name="Lapidus A."/>
            <person name="Glavina del Rio T."/>
            <person name="Tice H."/>
            <person name="Bruce D."/>
            <person name="Goodwin L."/>
            <person name="Pitluck S."/>
            <person name="Sims D."/>
            <person name="Meincke L."/>
            <person name="Brettin T."/>
            <person name="Detter J.C."/>
            <person name="Han C."/>
            <person name="Larimer F."/>
            <person name="Land M."/>
            <person name="Hauser L."/>
            <person name="Kyrpides N."/>
            <person name="Ovchinnikova G."/>
            <person name="Kataeva I."/>
            <person name="Adams M.W.W."/>
        </authorList>
    </citation>
    <scope>NUCLEOTIDE SEQUENCE [LARGE SCALE GENOMIC DNA]</scope>
    <source>
        <strain>ATCC BAA-1888 / DSM 6725 / KCTC 15123 / Z-1320</strain>
    </source>
</reference>
<evidence type="ECO:0000255" key="1">
    <source>
        <dbReference type="HAMAP-Rule" id="MF_01345"/>
    </source>
</evidence>
<evidence type="ECO:0000305" key="2"/>
<comment type="function">
    <text evidence="1">One of the primary rRNA binding proteins, it binds specifically to the 5'-end of 16S ribosomal RNA.</text>
</comment>
<comment type="subunit">
    <text evidence="1">Part of the 30S ribosomal subunit.</text>
</comment>
<comment type="similarity">
    <text evidence="1">Belongs to the universal ribosomal protein uS17 family.</text>
</comment>
<name>RS17_CALBD</name>
<keyword id="KW-0687">Ribonucleoprotein</keyword>
<keyword id="KW-0689">Ribosomal protein</keyword>
<keyword id="KW-0694">RNA-binding</keyword>
<keyword id="KW-0699">rRNA-binding</keyword>
<accession>B9MKH2</accession>
<organism>
    <name type="scientific">Caldicellulosiruptor bescii (strain ATCC BAA-1888 / DSM 6725 / KCTC 15123 / Z-1320)</name>
    <name type="common">Anaerocellum thermophilum</name>
    <dbReference type="NCBI Taxonomy" id="521460"/>
    <lineage>
        <taxon>Bacteria</taxon>
        <taxon>Bacillati</taxon>
        <taxon>Bacillota</taxon>
        <taxon>Bacillota incertae sedis</taxon>
        <taxon>Caldicellulosiruptorales</taxon>
        <taxon>Caldicellulosiruptoraceae</taxon>
        <taxon>Caldicellulosiruptor</taxon>
    </lineage>
</organism>
<protein>
    <recommendedName>
        <fullName evidence="1">Small ribosomal subunit protein uS17</fullName>
    </recommendedName>
    <alternativeName>
        <fullName evidence="2">30S ribosomal protein S17</fullName>
    </alternativeName>
</protein>
<proteinExistence type="inferred from homology"/>
<sequence>MEQKRGMRKTRVGVVVSDKMDKTVVVAVERHVQHPLYKKTIKRTTKFKAHDENNECRVGDKVLIMETRPLSKEKRWRVVQILERAK</sequence>
<gene>
    <name evidence="1" type="primary">rpsQ</name>
    <name type="ordered locus">Athe_1736</name>
</gene>
<feature type="chain" id="PRO_1000166456" description="Small ribosomal subunit protein uS17">
    <location>
        <begin position="1"/>
        <end position="86"/>
    </location>
</feature>
<dbReference type="EMBL" id="CP001393">
    <property type="protein sequence ID" value="ACM60830.1"/>
    <property type="molecule type" value="Genomic_DNA"/>
</dbReference>
<dbReference type="RefSeq" id="WP_013429974.1">
    <property type="nucleotide sequence ID" value="NC_012034.1"/>
</dbReference>
<dbReference type="SMR" id="B9MKH2"/>
<dbReference type="STRING" id="521460.Athe_1736"/>
<dbReference type="GeneID" id="31773093"/>
<dbReference type="KEGG" id="ate:Athe_1736"/>
<dbReference type="eggNOG" id="COG0186">
    <property type="taxonomic scope" value="Bacteria"/>
</dbReference>
<dbReference type="HOGENOM" id="CLU_073626_1_0_9"/>
<dbReference type="Proteomes" id="UP000007723">
    <property type="component" value="Chromosome"/>
</dbReference>
<dbReference type="GO" id="GO:0022627">
    <property type="term" value="C:cytosolic small ribosomal subunit"/>
    <property type="evidence" value="ECO:0007669"/>
    <property type="project" value="TreeGrafter"/>
</dbReference>
<dbReference type="GO" id="GO:0019843">
    <property type="term" value="F:rRNA binding"/>
    <property type="evidence" value="ECO:0007669"/>
    <property type="project" value="UniProtKB-UniRule"/>
</dbReference>
<dbReference type="GO" id="GO:0003735">
    <property type="term" value="F:structural constituent of ribosome"/>
    <property type="evidence" value="ECO:0007669"/>
    <property type="project" value="InterPro"/>
</dbReference>
<dbReference type="GO" id="GO:0006412">
    <property type="term" value="P:translation"/>
    <property type="evidence" value="ECO:0007669"/>
    <property type="project" value="UniProtKB-UniRule"/>
</dbReference>
<dbReference type="CDD" id="cd00364">
    <property type="entry name" value="Ribosomal_uS17"/>
    <property type="match status" value="1"/>
</dbReference>
<dbReference type="FunFam" id="2.40.50.140:FF:000123">
    <property type="entry name" value="30S ribosomal protein S17"/>
    <property type="match status" value="1"/>
</dbReference>
<dbReference type="Gene3D" id="2.40.50.140">
    <property type="entry name" value="Nucleic acid-binding proteins"/>
    <property type="match status" value="1"/>
</dbReference>
<dbReference type="HAMAP" id="MF_01345_B">
    <property type="entry name" value="Ribosomal_uS17_B"/>
    <property type="match status" value="1"/>
</dbReference>
<dbReference type="InterPro" id="IPR012340">
    <property type="entry name" value="NA-bd_OB-fold"/>
</dbReference>
<dbReference type="InterPro" id="IPR000266">
    <property type="entry name" value="Ribosomal_uS17"/>
</dbReference>
<dbReference type="InterPro" id="IPR019984">
    <property type="entry name" value="Ribosomal_uS17_bact/chlr"/>
</dbReference>
<dbReference type="InterPro" id="IPR019979">
    <property type="entry name" value="Ribosomal_uS17_CS"/>
</dbReference>
<dbReference type="NCBIfam" id="NF004123">
    <property type="entry name" value="PRK05610.1"/>
    <property type="match status" value="1"/>
</dbReference>
<dbReference type="NCBIfam" id="TIGR03635">
    <property type="entry name" value="uS17_bact"/>
    <property type="match status" value="1"/>
</dbReference>
<dbReference type="PANTHER" id="PTHR10744">
    <property type="entry name" value="40S RIBOSOMAL PROTEIN S11 FAMILY MEMBER"/>
    <property type="match status" value="1"/>
</dbReference>
<dbReference type="PANTHER" id="PTHR10744:SF1">
    <property type="entry name" value="SMALL RIBOSOMAL SUBUNIT PROTEIN US17M"/>
    <property type="match status" value="1"/>
</dbReference>
<dbReference type="Pfam" id="PF00366">
    <property type="entry name" value="Ribosomal_S17"/>
    <property type="match status" value="1"/>
</dbReference>
<dbReference type="PRINTS" id="PR00973">
    <property type="entry name" value="RIBOSOMALS17"/>
</dbReference>
<dbReference type="SUPFAM" id="SSF50249">
    <property type="entry name" value="Nucleic acid-binding proteins"/>
    <property type="match status" value="1"/>
</dbReference>
<dbReference type="PROSITE" id="PS00056">
    <property type="entry name" value="RIBOSOMAL_S17"/>
    <property type="match status" value="1"/>
</dbReference>